<sequence>MGKSMTALRVIGDIGGTYARFAVAERGKYSELQHLSVSKYAALKDALGEYLAALPRDLRPTRGALAVAGPVSGDEVKLTNLNWSFSITALKADLGMSSLVVVNDFAATAMSVPYLPEADCYPIGPPQSKTSGPVGVIGPGTGLGVSALVPDAGRWILLPGEGGHSTLPPATQAESLIVEVLRTHWPHVSAERALSGAGLVNLYQALCSIEGKRPDPLSPADVTDRAMRGSDPTCVKAFEVFCSMLGTVAGDLALTIGATGGIYIAGGILLRFKEAFASSPFRDRFEDKGRFQDYLRRIPTLLILEESPALLGLANLPLEP</sequence>
<dbReference type="EC" id="2.7.1.2" evidence="1"/>
<dbReference type="EMBL" id="CP000321">
    <property type="protein sequence ID" value="ABE64962.1"/>
    <property type="status" value="ALT_INIT"/>
    <property type="molecule type" value="Genomic_DNA"/>
</dbReference>
<dbReference type="SMR" id="Q1QFN5"/>
<dbReference type="KEGG" id="nha:Nham_4371"/>
<dbReference type="eggNOG" id="COG0837">
    <property type="taxonomic scope" value="Bacteria"/>
</dbReference>
<dbReference type="HOGENOM" id="CLU_042582_1_0_5"/>
<dbReference type="OrthoDB" id="9800595at2"/>
<dbReference type="Proteomes" id="UP000001953">
    <property type="component" value="Plasmid pNITHX2"/>
</dbReference>
<dbReference type="GO" id="GO:0005829">
    <property type="term" value="C:cytosol"/>
    <property type="evidence" value="ECO:0007669"/>
    <property type="project" value="TreeGrafter"/>
</dbReference>
<dbReference type="GO" id="GO:0005524">
    <property type="term" value="F:ATP binding"/>
    <property type="evidence" value="ECO:0007669"/>
    <property type="project" value="UniProtKB-UniRule"/>
</dbReference>
<dbReference type="GO" id="GO:0005536">
    <property type="term" value="F:D-glucose binding"/>
    <property type="evidence" value="ECO:0007669"/>
    <property type="project" value="InterPro"/>
</dbReference>
<dbReference type="GO" id="GO:0004340">
    <property type="term" value="F:glucokinase activity"/>
    <property type="evidence" value="ECO:0007669"/>
    <property type="project" value="UniProtKB-UniRule"/>
</dbReference>
<dbReference type="GO" id="GO:0006096">
    <property type="term" value="P:glycolytic process"/>
    <property type="evidence" value="ECO:0007669"/>
    <property type="project" value="UniProtKB-UniRule"/>
</dbReference>
<dbReference type="CDD" id="cd24008">
    <property type="entry name" value="ASKHA_NBD_GLK"/>
    <property type="match status" value="1"/>
</dbReference>
<dbReference type="FunFam" id="3.40.367.20:FF:000002">
    <property type="entry name" value="Glucokinase"/>
    <property type="match status" value="1"/>
</dbReference>
<dbReference type="Gene3D" id="3.30.420.40">
    <property type="match status" value="1"/>
</dbReference>
<dbReference type="Gene3D" id="3.40.367.20">
    <property type="match status" value="1"/>
</dbReference>
<dbReference type="HAMAP" id="MF_00524">
    <property type="entry name" value="Glucokinase"/>
    <property type="match status" value="1"/>
</dbReference>
<dbReference type="InterPro" id="IPR043129">
    <property type="entry name" value="ATPase_NBD"/>
</dbReference>
<dbReference type="InterPro" id="IPR050201">
    <property type="entry name" value="Bacterial_glucokinase"/>
</dbReference>
<dbReference type="InterPro" id="IPR003836">
    <property type="entry name" value="Glucokinase"/>
</dbReference>
<dbReference type="NCBIfam" id="TIGR00749">
    <property type="entry name" value="glk"/>
    <property type="match status" value="1"/>
</dbReference>
<dbReference type="NCBIfam" id="NF009073">
    <property type="entry name" value="PRK12408.1"/>
    <property type="match status" value="1"/>
</dbReference>
<dbReference type="PANTHER" id="PTHR47690">
    <property type="entry name" value="GLUCOKINASE"/>
    <property type="match status" value="1"/>
</dbReference>
<dbReference type="PANTHER" id="PTHR47690:SF1">
    <property type="entry name" value="GLUCOKINASE"/>
    <property type="match status" value="1"/>
</dbReference>
<dbReference type="Pfam" id="PF02685">
    <property type="entry name" value="Glucokinase"/>
    <property type="match status" value="1"/>
</dbReference>
<dbReference type="SUPFAM" id="SSF53067">
    <property type="entry name" value="Actin-like ATPase domain"/>
    <property type="match status" value="1"/>
</dbReference>
<gene>
    <name evidence="1" type="primary">glk</name>
    <name type="ordered locus">Nham_4371</name>
</gene>
<protein>
    <recommendedName>
        <fullName evidence="1">Glucokinase</fullName>
        <ecNumber evidence="1">2.7.1.2</ecNumber>
    </recommendedName>
    <alternativeName>
        <fullName evidence="1">Glucose kinase</fullName>
    </alternativeName>
</protein>
<proteinExistence type="inferred from homology"/>
<organism>
    <name type="scientific">Nitrobacter hamburgensis (strain DSM 10229 / NCIMB 13809 / X14)</name>
    <dbReference type="NCBI Taxonomy" id="323097"/>
    <lineage>
        <taxon>Bacteria</taxon>
        <taxon>Pseudomonadati</taxon>
        <taxon>Pseudomonadota</taxon>
        <taxon>Alphaproteobacteria</taxon>
        <taxon>Hyphomicrobiales</taxon>
        <taxon>Nitrobacteraceae</taxon>
        <taxon>Nitrobacter</taxon>
    </lineage>
</organism>
<feature type="chain" id="PRO_0000268779" description="Glucokinase">
    <location>
        <begin position="1"/>
        <end position="320"/>
    </location>
</feature>
<feature type="binding site" evidence="1">
    <location>
        <begin position="12"/>
        <end position="17"/>
    </location>
    <ligand>
        <name>ATP</name>
        <dbReference type="ChEBI" id="CHEBI:30616"/>
    </ligand>
</feature>
<geneLocation type="plasmid">
    <name>pNITHX2</name>
</geneLocation>
<comment type="catalytic activity">
    <reaction evidence="1">
        <text>D-glucose + ATP = D-glucose 6-phosphate + ADP + H(+)</text>
        <dbReference type="Rhea" id="RHEA:17825"/>
        <dbReference type="ChEBI" id="CHEBI:4167"/>
        <dbReference type="ChEBI" id="CHEBI:15378"/>
        <dbReference type="ChEBI" id="CHEBI:30616"/>
        <dbReference type="ChEBI" id="CHEBI:61548"/>
        <dbReference type="ChEBI" id="CHEBI:456216"/>
        <dbReference type="EC" id="2.7.1.2"/>
    </reaction>
</comment>
<comment type="subcellular location">
    <subcellularLocation>
        <location evidence="1">Cytoplasm</location>
    </subcellularLocation>
</comment>
<comment type="similarity">
    <text evidence="1">Belongs to the bacterial glucokinase family.</text>
</comment>
<comment type="sequence caution" evidence="2">
    <conflict type="erroneous initiation">
        <sequence resource="EMBL-CDS" id="ABE64962"/>
    </conflict>
</comment>
<reference key="1">
    <citation type="submission" date="2006-03" db="EMBL/GenBank/DDBJ databases">
        <title>Complete sequence of plasmid 2 of Nitrobacter hamburgensis X14.</title>
        <authorList>
            <consortium name="US DOE Joint Genome Institute"/>
            <person name="Copeland A."/>
            <person name="Lucas S."/>
            <person name="Lapidus A."/>
            <person name="Barry K."/>
            <person name="Detter J.C."/>
            <person name="Glavina del Rio T."/>
            <person name="Hammon N."/>
            <person name="Israni S."/>
            <person name="Dalin E."/>
            <person name="Tice H."/>
            <person name="Pitluck S."/>
            <person name="Chain P."/>
            <person name="Malfatti S."/>
            <person name="Shin M."/>
            <person name="Vergez L."/>
            <person name="Schmutz J."/>
            <person name="Larimer F."/>
            <person name="Land M."/>
            <person name="Hauser L."/>
            <person name="Kyrpides N."/>
            <person name="Ivanova N."/>
            <person name="Ward B."/>
            <person name="Arp D."/>
            <person name="Klotz M."/>
            <person name="Stein L."/>
            <person name="O'Mullan G."/>
            <person name="Starkenburg S."/>
            <person name="Sayavedra L."/>
            <person name="Poret-Peterson A.T."/>
            <person name="Gentry M.E."/>
            <person name="Bruce D."/>
            <person name="Richardson P."/>
        </authorList>
    </citation>
    <scope>NUCLEOTIDE SEQUENCE [LARGE SCALE GENOMIC DNA]</scope>
    <source>
        <strain>DSM 10229 / NCIMB 13809 / X14</strain>
    </source>
</reference>
<keyword id="KW-0067">ATP-binding</keyword>
<keyword id="KW-0963">Cytoplasm</keyword>
<keyword id="KW-0324">Glycolysis</keyword>
<keyword id="KW-0418">Kinase</keyword>
<keyword id="KW-0547">Nucleotide-binding</keyword>
<keyword id="KW-0614">Plasmid</keyword>
<keyword id="KW-1185">Reference proteome</keyword>
<keyword id="KW-0808">Transferase</keyword>
<evidence type="ECO:0000255" key="1">
    <source>
        <dbReference type="HAMAP-Rule" id="MF_00524"/>
    </source>
</evidence>
<evidence type="ECO:0000305" key="2"/>
<accession>Q1QFN5</accession>
<name>GLK_NITHX</name>